<organism>
    <name type="scientific">Felis catus</name>
    <name type="common">Cat</name>
    <name type="synonym">Felis silvestris catus</name>
    <dbReference type="NCBI Taxonomy" id="9685"/>
    <lineage>
        <taxon>Eukaryota</taxon>
        <taxon>Metazoa</taxon>
        <taxon>Chordata</taxon>
        <taxon>Craniata</taxon>
        <taxon>Vertebrata</taxon>
        <taxon>Euteleostomi</taxon>
        <taxon>Mammalia</taxon>
        <taxon>Eutheria</taxon>
        <taxon>Laurasiatheria</taxon>
        <taxon>Carnivora</taxon>
        <taxon>Feliformia</taxon>
        <taxon>Felidae</taxon>
        <taxon>Felinae</taxon>
        <taxon>Felis</taxon>
    </lineage>
</organism>
<dbReference type="EMBL" id="AANG02169639">
    <property type="status" value="NOT_ANNOTATED_CDS"/>
    <property type="molecule type" value="Genomic_DNA"/>
</dbReference>
<dbReference type="EMBL" id="AANG02169640">
    <property type="status" value="NOT_ANNOTATED_CDS"/>
    <property type="molecule type" value="Genomic_DNA"/>
</dbReference>
<dbReference type="EMBL" id="AANG02169641">
    <property type="status" value="NOT_ANNOTATED_CDS"/>
    <property type="molecule type" value="Genomic_DNA"/>
</dbReference>
<dbReference type="PIR" id="JL0111">
    <property type="entry name" value="YLCTA"/>
</dbReference>
<dbReference type="SMR" id="P19707"/>
<dbReference type="FunCoup" id="P19707">
    <property type="interactions" value="5"/>
</dbReference>
<dbReference type="STRING" id="9685.ENSFCAP00000011761"/>
<dbReference type="PaxDb" id="9685-ENSFCAP00000020110"/>
<dbReference type="eggNOG" id="ENOG502S4PB">
    <property type="taxonomic scope" value="Eukaryota"/>
</dbReference>
<dbReference type="InParanoid" id="P19707"/>
<dbReference type="Proteomes" id="UP000011712">
    <property type="component" value="Unplaced"/>
</dbReference>
<dbReference type="GO" id="GO:0034364">
    <property type="term" value="C:high-density lipoprotein particle"/>
    <property type="evidence" value="ECO:0007669"/>
    <property type="project" value="UniProtKB-KW"/>
</dbReference>
<dbReference type="GO" id="GO:0006953">
    <property type="term" value="P:acute-phase response"/>
    <property type="evidence" value="ECO:0007669"/>
    <property type="project" value="UniProtKB-KW"/>
</dbReference>
<dbReference type="FunFam" id="1.10.132.110:FF:000001">
    <property type="entry name" value="Serum amyloid A protein"/>
    <property type="match status" value="1"/>
</dbReference>
<dbReference type="Gene3D" id="1.10.132.110">
    <property type="entry name" value="Serum amyloid A protein"/>
    <property type="match status" value="1"/>
</dbReference>
<dbReference type="InterPro" id="IPR000096">
    <property type="entry name" value="Serum_amyloid_A"/>
</dbReference>
<dbReference type="InterPro" id="IPR052464">
    <property type="entry name" value="Synovial_Prolif_Regulator"/>
</dbReference>
<dbReference type="PANTHER" id="PTHR23424">
    <property type="entry name" value="SERUM AMYLOID A"/>
    <property type="match status" value="1"/>
</dbReference>
<dbReference type="PANTHER" id="PTHR23424:SF29">
    <property type="entry name" value="SERUM AMYLOID A PROTEIN"/>
    <property type="match status" value="1"/>
</dbReference>
<dbReference type="Pfam" id="PF00277">
    <property type="entry name" value="SAA"/>
    <property type="match status" value="1"/>
</dbReference>
<dbReference type="PIRSF" id="PIRSF002472">
    <property type="entry name" value="Serum_amyloid_A"/>
    <property type="match status" value="1"/>
</dbReference>
<dbReference type="PRINTS" id="PR00306">
    <property type="entry name" value="SERUMAMYLOID"/>
</dbReference>
<dbReference type="SMART" id="SM00197">
    <property type="entry name" value="SAA"/>
    <property type="match status" value="1"/>
</dbReference>
<dbReference type="PROSITE" id="PS00992">
    <property type="entry name" value="SAA"/>
    <property type="match status" value="1"/>
</dbReference>
<sequence>MKLFTGLVFCSLVLGVSSQWYSFLGEAAQGAWDMWRAYSDMREANYIGADKYFHARGNYDAAQRGPGGAWAAKVISDARENSQRVTDFFRHGNSGHGAEDSKADQAANEWGRSGKDPNHFRPAGLPSKY</sequence>
<accession>P19707</accession>
<accession>M3X0G8</accession>
<comment type="function">
    <text>Major acute phase reactant. Apolipoprotein of the HDL complex.</text>
</comment>
<comment type="subcellular location">
    <subcellularLocation>
        <location>Secreted</location>
    </subcellularLocation>
</comment>
<comment type="tissue specificity">
    <text>Expressed by the liver; secreted in plasma.</text>
</comment>
<comment type="induction">
    <text>Upon cytokine stimulation.</text>
</comment>
<comment type="disease">
    <text>Reactive, secondary amyloidosis is characterized by the extracellular accumulation in various tissues of the SAA protein. These deposits are highly insoluble and resistant to proteolysis; they disrupt tissue structure and compromise function.</text>
</comment>
<comment type="similarity">
    <text evidence="6">Belongs to the SAA family.</text>
</comment>
<keyword id="KW-0011">Acute phase</keyword>
<keyword id="KW-0034">Amyloid</keyword>
<keyword id="KW-0903">Direct protein sequencing</keyword>
<keyword id="KW-0345">HDL</keyword>
<keyword id="KW-0873">Pyrrolidone carboxylic acid</keyword>
<keyword id="KW-1185">Reference proteome</keyword>
<keyword id="KW-0964">Secreted</keyword>
<keyword id="KW-0732">Signal</keyword>
<feature type="signal peptide" evidence="4">
    <location>
        <begin position="1"/>
        <end position="18"/>
    </location>
</feature>
<feature type="chain" id="PRO_0000174667" description="Serum amyloid A protein">
    <location>
        <begin position="19"/>
        <end position="129"/>
    </location>
</feature>
<feature type="chain" id="PRO_0000430938" description="Amyloid protein A" evidence="4">
    <location>
        <begin position="19"/>
        <end position="111"/>
    </location>
</feature>
<feature type="propeptide" id="PRO_0000430939" description="Often cleaved during amyloidogenesis" evidence="1">
    <location>
        <begin position="112"/>
        <end position="129"/>
    </location>
</feature>
<feature type="region of interest" description="Disordered" evidence="3">
    <location>
        <begin position="88"/>
        <end position="129"/>
    </location>
</feature>
<feature type="modified residue" description="Pyrrolidone carboxylic acid" evidence="2">
    <location>
        <position position="19"/>
    </location>
</feature>
<feature type="sequence conflict" description="In Ref. 2; AA sequence." ref="2">
    <original>Q</original>
    <variation>E</variation>
    <location>
        <position position="19"/>
    </location>
</feature>
<feature type="sequence conflict" description="In Ref. 2; AA sequence." ref="2">
    <original>AAN</original>
    <variation>EWG</variation>
    <location>
        <begin position="106"/>
        <end position="108"/>
    </location>
</feature>
<name>SAA_FELCA</name>
<reference key="1">
    <citation type="journal article" date="2007" name="Genome Res.">
        <title>Initial sequence and comparative analysis of the cat genome.</title>
        <authorList>
            <person name="Pontius J.U."/>
            <person name="Mullikin J.C."/>
            <person name="Smith D.R."/>
            <person name="Lindblad-Toh K."/>
            <person name="Gnerre S."/>
            <person name="Clamp M."/>
            <person name="Chang J."/>
            <person name="Stephens R."/>
            <person name="Neelam B."/>
            <person name="Volfovsky N."/>
            <person name="Schaffer A.A."/>
            <person name="Agarwala R."/>
            <person name="Narfstrom K."/>
            <person name="Murphy W.J."/>
            <person name="Giger U."/>
            <person name="Roca A.L."/>
            <person name="Antunes A."/>
            <person name="Menotti-Raymond M."/>
            <person name="Yuhki N."/>
            <person name="Pecon-Slattery J."/>
            <person name="Johnson W.E."/>
            <person name="Bourque G."/>
            <person name="Tesler G."/>
            <person name="O'Brien S.J."/>
        </authorList>
    </citation>
    <scope>NUCLEOTIDE SEQUENCE [LARGE SCALE GENOMIC DNA]</scope>
    <source>
        <strain>Abyssinian</strain>
    </source>
</reference>
<reference key="2">
    <citation type="journal article" date="1989" name="Comp. Biochem. Physiol.">
        <title>Primary structures of dog and cat amyloid A proteins: comparison to human AA.</title>
        <authorList>
            <person name="Kluve-Beckerman B."/>
            <person name="Dwulet F.E."/>
            <person name="Dibartola S.P."/>
            <person name="Benson M.D."/>
        </authorList>
    </citation>
    <scope>PROTEIN SEQUENCE OF 19-111</scope>
</reference>
<gene>
    <name type="primary">SAA1</name>
</gene>
<evidence type="ECO:0000250" key="1">
    <source>
        <dbReference type="UniProtKB" id="P19708"/>
    </source>
</evidence>
<evidence type="ECO:0000250" key="2">
    <source>
        <dbReference type="UniProtKB" id="P42819"/>
    </source>
</evidence>
<evidence type="ECO:0000256" key="3">
    <source>
        <dbReference type="SAM" id="MobiDB-lite"/>
    </source>
</evidence>
<evidence type="ECO:0000269" key="4">
    <source>
    </source>
</evidence>
<evidence type="ECO:0000303" key="5">
    <source>
    </source>
</evidence>
<evidence type="ECO:0000305" key="6"/>
<proteinExistence type="evidence at protein level"/>
<protein>
    <recommendedName>
        <fullName evidence="6">Serum amyloid A protein</fullName>
        <shortName evidence="6">SAA</shortName>
    </recommendedName>
    <component>
        <recommendedName>
            <fullName evidence="5">Amyloid protein A</fullName>
        </recommendedName>
        <alternativeName>
            <fullName evidence="6">Amyloid fibril protein AA</fullName>
        </alternativeName>
    </component>
</protein>